<reference key="1">
    <citation type="submission" date="2006-01" db="EMBL/GenBank/DDBJ databases">
        <title>Complete sequence of Anaeromyxobacter dehalogenans 2CP-C.</title>
        <authorList>
            <person name="Copeland A."/>
            <person name="Lucas S."/>
            <person name="Lapidus A."/>
            <person name="Barry K."/>
            <person name="Detter J.C."/>
            <person name="Glavina T."/>
            <person name="Hammon N."/>
            <person name="Israni S."/>
            <person name="Pitluck S."/>
            <person name="Brettin T."/>
            <person name="Bruce D."/>
            <person name="Han C."/>
            <person name="Tapia R."/>
            <person name="Gilna P."/>
            <person name="Kiss H."/>
            <person name="Schmutz J."/>
            <person name="Larimer F."/>
            <person name="Land M."/>
            <person name="Kyrpides N."/>
            <person name="Anderson I."/>
            <person name="Sanford R.A."/>
            <person name="Ritalahti K.M."/>
            <person name="Thomas H.S."/>
            <person name="Kirby J.R."/>
            <person name="Zhulin I.B."/>
            <person name="Loeffler F.E."/>
            <person name="Richardson P."/>
        </authorList>
    </citation>
    <scope>NUCLEOTIDE SEQUENCE [LARGE SCALE GENOMIC DNA]</scope>
    <source>
        <strain>2CP-C</strain>
    </source>
</reference>
<name>NUOA_ANADE</name>
<accession>Q2IL11</accession>
<dbReference type="EC" id="7.1.1.-" evidence="1"/>
<dbReference type="EMBL" id="CP000251">
    <property type="protein sequence ID" value="ABC82340.1"/>
    <property type="molecule type" value="Genomic_DNA"/>
</dbReference>
<dbReference type="RefSeq" id="WP_011421622.1">
    <property type="nucleotide sequence ID" value="NC_007760.1"/>
</dbReference>
<dbReference type="SMR" id="Q2IL11"/>
<dbReference type="STRING" id="290397.Adeh_2570"/>
<dbReference type="DNASU" id="3890054"/>
<dbReference type="KEGG" id="ade:Adeh_2570"/>
<dbReference type="eggNOG" id="COG0838">
    <property type="taxonomic scope" value="Bacteria"/>
</dbReference>
<dbReference type="HOGENOM" id="CLU_119549_3_1_7"/>
<dbReference type="OrthoDB" id="9791970at2"/>
<dbReference type="Proteomes" id="UP000001935">
    <property type="component" value="Chromosome"/>
</dbReference>
<dbReference type="GO" id="GO:0030964">
    <property type="term" value="C:NADH dehydrogenase complex"/>
    <property type="evidence" value="ECO:0007669"/>
    <property type="project" value="TreeGrafter"/>
</dbReference>
<dbReference type="GO" id="GO:0005886">
    <property type="term" value="C:plasma membrane"/>
    <property type="evidence" value="ECO:0007669"/>
    <property type="project" value="UniProtKB-SubCell"/>
</dbReference>
<dbReference type="GO" id="GO:0008137">
    <property type="term" value="F:NADH dehydrogenase (ubiquinone) activity"/>
    <property type="evidence" value="ECO:0007669"/>
    <property type="project" value="InterPro"/>
</dbReference>
<dbReference type="GO" id="GO:0050136">
    <property type="term" value="F:NADH:ubiquinone reductase (non-electrogenic) activity"/>
    <property type="evidence" value="ECO:0007669"/>
    <property type="project" value="UniProtKB-UniRule"/>
</dbReference>
<dbReference type="GO" id="GO:0048038">
    <property type="term" value="F:quinone binding"/>
    <property type="evidence" value="ECO:0007669"/>
    <property type="project" value="UniProtKB-KW"/>
</dbReference>
<dbReference type="Gene3D" id="1.20.58.1610">
    <property type="entry name" value="NADH:ubiquinone/plastoquinone oxidoreductase, chain 3"/>
    <property type="match status" value="1"/>
</dbReference>
<dbReference type="HAMAP" id="MF_01394">
    <property type="entry name" value="NDH1_NuoA"/>
    <property type="match status" value="1"/>
</dbReference>
<dbReference type="InterPro" id="IPR023043">
    <property type="entry name" value="NAD(P)H_OxRDtase_bac/plastid"/>
</dbReference>
<dbReference type="InterPro" id="IPR000440">
    <property type="entry name" value="NADH_UbQ/plastoQ_OxRdtase_su3"/>
</dbReference>
<dbReference type="InterPro" id="IPR038430">
    <property type="entry name" value="NDAH_ubi_oxred_su3_sf"/>
</dbReference>
<dbReference type="PANTHER" id="PTHR11058:SF22">
    <property type="entry name" value="NADH-QUINONE OXIDOREDUCTASE SUBUNIT A"/>
    <property type="match status" value="1"/>
</dbReference>
<dbReference type="PANTHER" id="PTHR11058">
    <property type="entry name" value="NADH-UBIQUINONE OXIDOREDUCTASE CHAIN 3"/>
    <property type="match status" value="1"/>
</dbReference>
<dbReference type="Pfam" id="PF00507">
    <property type="entry name" value="Oxidored_q4"/>
    <property type="match status" value="1"/>
</dbReference>
<keyword id="KW-0997">Cell inner membrane</keyword>
<keyword id="KW-1003">Cell membrane</keyword>
<keyword id="KW-0472">Membrane</keyword>
<keyword id="KW-0520">NAD</keyword>
<keyword id="KW-0874">Quinone</keyword>
<keyword id="KW-1185">Reference proteome</keyword>
<keyword id="KW-1278">Translocase</keyword>
<keyword id="KW-0812">Transmembrane</keyword>
<keyword id="KW-1133">Transmembrane helix</keyword>
<keyword id="KW-0813">Transport</keyword>
<keyword id="KW-0830">Ubiquinone</keyword>
<proteinExistence type="inferred from homology"/>
<evidence type="ECO:0000255" key="1">
    <source>
        <dbReference type="HAMAP-Rule" id="MF_01394"/>
    </source>
</evidence>
<feature type="chain" id="PRO_5000108234" description="NADH-quinone oxidoreductase subunit A">
    <location>
        <begin position="1"/>
        <end position="129"/>
    </location>
</feature>
<feature type="transmembrane region" description="Helical" evidence="1">
    <location>
        <begin position="9"/>
        <end position="29"/>
    </location>
</feature>
<feature type="transmembrane region" description="Helical" evidence="1">
    <location>
        <begin position="68"/>
        <end position="88"/>
    </location>
</feature>
<feature type="transmembrane region" description="Helical" evidence="1">
    <location>
        <begin position="97"/>
        <end position="117"/>
    </location>
</feature>
<sequence>MLTPLQIYFPIGVVLLVAVVLAFTMLGLANVLGPRRPSLVKQTPFECGSEPIGSARERFGVKFYVVALLFIVFDIEAIFLYPWAVLLLPDGQGYPGLGWPGFISMGIFVFTLVAGLVYVWKKGVLDWAD</sequence>
<comment type="function">
    <text evidence="1">NDH-1 shuttles electrons from NADH, via FMN and iron-sulfur (Fe-S) centers, to quinones in the respiratory chain. The immediate electron acceptor for the enzyme in this species is believed to be ubiquinone. Couples the redox reaction to proton translocation (for every two electrons transferred, four hydrogen ions are translocated across the cytoplasmic membrane), and thus conserves the redox energy in a proton gradient.</text>
</comment>
<comment type="catalytic activity">
    <reaction evidence="1">
        <text>a quinone + NADH + 5 H(+)(in) = a quinol + NAD(+) + 4 H(+)(out)</text>
        <dbReference type="Rhea" id="RHEA:57888"/>
        <dbReference type="ChEBI" id="CHEBI:15378"/>
        <dbReference type="ChEBI" id="CHEBI:24646"/>
        <dbReference type="ChEBI" id="CHEBI:57540"/>
        <dbReference type="ChEBI" id="CHEBI:57945"/>
        <dbReference type="ChEBI" id="CHEBI:132124"/>
    </reaction>
</comment>
<comment type="subunit">
    <text evidence="1">NDH-1 is composed of 14 different subunits. Subunits NuoA, H, J, K, L, M, N constitute the membrane sector of the complex.</text>
</comment>
<comment type="subcellular location">
    <subcellularLocation>
        <location evidence="1">Cell inner membrane</location>
        <topology evidence="1">Multi-pass membrane protein</topology>
    </subcellularLocation>
</comment>
<comment type="similarity">
    <text evidence="1">Belongs to the complex I subunit 3 family.</text>
</comment>
<gene>
    <name evidence="1" type="primary">nuoA</name>
    <name type="ordered locus">Adeh_2570</name>
</gene>
<protein>
    <recommendedName>
        <fullName evidence="1">NADH-quinone oxidoreductase subunit A</fullName>
        <ecNumber evidence="1">7.1.1.-</ecNumber>
    </recommendedName>
    <alternativeName>
        <fullName evidence="1">NADH dehydrogenase I subunit A</fullName>
    </alternativeName>
    <alternativeName>
        <fullName evidence="1">NDH-1 subunit A</fullName>
    </alternativeName>
    <alternativeName>
        <fullName evidence="1">NUO1</fullName>
    </alternativeName>
</protein>
<organism>
    <name type="scientific">Anaeromyxobacter dehalogenans (strain 2CP-C)</name>
    <dbReference type="NCBI Taxonomy" id="290397"/>
    <lineage>
        <taxon>Bacteria</taxon>
        <taxon>Pseudomonadati</taxon>
        <taxon>Myxococcota</taxon>
        <taxon>Myxococcia</taxon>
        <taxon>Myxococcales</taxon>
        <taxon>Cystobacterineae</taxon>
        <taxon>Anaeromyxobacteraceae</taxon>
        <taxon>Anaeromyxobacter</taxon>
    </lineage>
</organism>